<accession>Q85AP4</accession>
<reference key="1">
    <citation type="journal article" date="2003" name="Nucleic Acids Res.">
        <title>The complete nucleotide sequence of the hornwort (Anthoceros formosae) chloroplast genome: insight into the earliest land plants.</title>
        <authorList>
            <person name="Kugita M."/>
            <person name="Kaneko A."/>
            <person name="Yamamoto Y."/>
            <person name="Takeya Y."/>
            <person name="Matsumoto T."/>
            <person name="Yoshinaga K."/>
        </authorList>
    </citation>
    <scope>NUCLEOTIDE SEQUENCE [LARGE SCALE GENOMIC DNA]</scope>
    <scope>RNA EDITING</scope>
</reference>
<reference key="2">
    <citation type="journal article" date="2003" name="Nucleic Acids Res.">
        <title>RNA editing in hornwort chloroplasts makes more than half the genes functional.</title>
        <authorList>
            <person name="Kugita M."/>
            <person name="Yamamoto Y."/>
            <person name="Fujikawa T."/>
            <person name="Matsumoto T."/>
            <person name="Yoshinaga K."/>
        </authorList>
    </citation>
    <scope>NUCLEOTIDE SEQUENCE [MRNA]</scope>
    <scope>RNA EDITING</scope>
    <source>
        <tissue>Thallus</tissue>
    </source>
</reference>
<protein>
    <recommendedName>
        <fullName evidence="1">Potassium/proton antiporter CemA</fullName>
    </recommendedName>
    <alternativeName>
        <fullName evidence="1">Chloroplast envelope membrane protein A</fullName>
        <shortName evidence="1">CemA</shortName>
    </alternativeName>
</protein>
<proteinExistence type="evidence at transcript level"/>
<comment type="function">
    <text evidence="1">Contributes to K(+)/H(+) antiport activity by supporting proton efflux to control proton extrusion and homeostasis in chloroplasts in a light-dependent manner to modulate photosynthesis. Prevents excessive induction of non-photochemical quenching (NPQ) under continuous-light conditions. Indirectly promotes efficient inorganic carbon uptake into chloroplasts.</text>
</comment>
<comment type="catalytic activity">
    <reaction evidence="1">
        <text>K(+)(in) + H(+)(out) = K(+)(out) + H(+)(in)</text>
        <dbReference type="Rhea" id="RHEA:29467"/>
        <dbReference type="ChEBI" id="CHEBI:15378"/>
        <dbReference type="ChEBI" id="CHEBI:29103"/>
    </reaction>
</comment>
<comment type="subcellular location">
    <subcellularLocation>
        <location evidence="1">Plastid</location>
        <location evidence="1">Chloroplast inner membrane</location>
        <topology evidence="1">Multi-pass membrane protein</topology>
    </subcellularLocation>
</comment>
<comment type="RNA editing">
    <location>
        <position position="9" evidence="2 3"/>
    </location>
    <location>
        <position position="91" evidence="2 3"/>
    </location>
    <location>
        <position position="121" evidence="2 3"/>
    </location>
    <location>
        <position position="251" evidence="2 3"/>
    </location>
    <location>
        <position position="252" evidence="2 3"/>
    </location>
    <location>
        <position position="268" evidence="2 3"/>
    </location>
    <location>
        <position position="299" evidence="2 3"/>
    </location>
    <location>
        <position position="324" evidence="2 3"/>
    </location>
    <location>
        <position position="434" evidence="2 3"/>
    </location>
    <location>
        <position position="445" evidence="2 3"/>
    </location>
    <location>
        <position position="457" evidence="2 3"/>
    </location>
    <location>
        <position position="480" evidence="2 3"/>
    </location>
    <location>
        <position position="489" evidence="2 3"/>
    </location>
    <location>
        <position position="492" evidence="2 3"/>
    </location>
    <location>
        <position position="498" evidence="2 3"/>
    </location>
    <text>The nonsense codons at positions 268 and 324 are modified to sense codons.</text>
</comment>
<comment type="similarity">
    <text evidence="1 4">Belongs to the CemA family.</text>
</comment>
<name>CEMA_ANTAG</name>
<organism>
    <name type="scientific">Anthoceros angustus</name>
    <name type="common">Hornwort</name>
    <name type="synonym">Anthoceros formosae</name>
    <dbReference type="NCBI Taxonomy" id="48387"/>
    <lineage>
        <taxon>Eukaryota</taxon>
        <taxon>Viridiplantae</taxon>
        <taxon>Streptophyta</taxon>
        <taxon>Embryophyta</taxon>
        <taxon>Anthocerotophyta</taxon>
        <taxon>Anthocerotopsida</taxon>
        <taxon>Anthocerotidae</taxon>
        <taxon>Anthocerotales</taxon>
        <taxon>Anthocerotaceae</taxon>
        <taxon>Anthoceros</taxon>
    </lineage>
</organism>
<gene>
    <name evidence="1" type="primary">cemA</name>
    <name type="synonym">ycf10</name>
</gene>
<geneLocation type="chloroplast"/>
<evidence type="ECO:0000255" key="1">
    <source>
        <dbReference type="HAMAP-Rule" id="MF_01308"/>
    </source>
</evidence>
<evidence type="ECO:0000269" key="2">
    <source>
    </source>
</evidence>
<evidence type="ECO:0000269" key="3">
    <source>
    </source>
</evidence>
<evidence type="ECO:0000305" key="4"/>
<feature type="chain" id="PRO_0000216632" description="Potassium/proton antiporter CemA">
    <location>
        <begin position="1"/>
        <end position="508"/>
    </location>
</feature>
<feature type="transmembrane region" description="Helical" evidence="1">
    <location>
        <begin position="66"/>
        <end position="86"/>
    </location>
</feature>
<feature type="transmembrane region" description="Helical" evidence="1">
    <location>
        <begin position="282"/>
        <end position="302"/>
    </location>
</feature>
<feature type="transmembrane region" description="Helical" evidence="1">
    <location>
        <begin position="386"/>
        <end position="406"/>
    </location>
</feature>
<feature type="transmembrane region" description="Helical" evidence="1">
    <location>
        <begin position="433"/>
        <end position="453"/>
    </location>
</feature>
<feature type="transmembrane region" description="Helical" evidence="1">
    <location>
        <begin position="468"/>
        <end position="488"/>
    </location>
</feature>
<keyword id="KW-0050">Antiport</keyword>
<keyword id="KW-0150">Chloroplast</keyword>
<keyword id="KW-0375">Hydrogen ion transport</keyword>
<keyword id="KW-0406">Ion transport</keyword>
<keyword id="KW-0472">Membrane</keyword>
<keyword id="KW-0934">Plastid</keyword>
<keyword id="KW-1001">Plastid inner membrane</keyword>
<keyword id="KW-0630">Potassium</keyword>
<keyword id="KW-0633">Potassium transport</keyword>
<keyword id="KW-0691">RNA editing</keyword>
<keyword id="KW-0812">Transmembrane</keyword>
<keyword id="KW-1133">Transmembrane helix</keyword>
<keyword id="KW-0813">Transport</keyword>
<sequence length="508" mass="60285">MKLYQWQIFRWFFETLNCSLGRAYKASKRIQYIKKDYSFYKNTILFSKGSWQAINLYTNTELRNTLFIIYWSLLEYRISLCFLNLLRKIESIQFKKLSVISFILNLHSSLSHVNKQLQILSKVLFDRFYFYLWKNMYFSLLLHNSLSRFVKESIEESEQSGFNNENKKDFQDETYFVLNESLEKDFSRIREMNRKLAWIEVTLNDLNTWKSYYLFFPFLSEMKNTPQNESSFKLKNFEITTPAYDSTGFIPRSISRTLSRFQIELMGQSSSLVLQEFRSAKYQALASIQYIGCLIFLPWIISRSLKEWFLEPWIKFWWDTYQSQISLNSFQEERASEGLQEVEEPLWLDKLVSNFLKNQSQDLNIEIYGETIQLIRMYNENSIQTILHLLTGMICFTTLGALFILGKKRLSVLNSWIQESFYSLSDTMKAFAILLLTDLCIGFHSPHGWEVVIGSSLEHLGFAHNKHIISCFVSTFPVILDTVSKYWIFRHLNRISPSIVATYHTMNE</sequence>
<dbReference type="EMBL" id="AB086179">
    <property type="protein sequence ID" value="BAC55361.1"/>
    <property type="molecule type" value="Genomic_DNA"/>
</dbReference>
<dbReference type="EMBL" id="AB087453">
    <property type="protein sequence ID" value="BAC55457.1"/>
    <property type="molecule type" value="mRNA"/>
</dbReference>
<dbReference type="RefSeq" id="NP_777425.1">
    <property type="nucleotide sequence ID" value="NC_004543.1"/>
</dbReference>
<dbReference type="SMR" id="Q85AP4"/>
<dbReference type="GeneID" id="2553517"/>
<dbReference type="GO" id="GO:0009706">
    <property type="term" value="C:chloroplast inner membrane"/>
    <property type="evidence" value="ECO:0007669"/>
    <property type="project" value="UniProtKB-SubCell"/>
</dbReference>
<dbReference type="GO" id="GO:0015297">
    <property type="term" value="F:antiporter activity"/>
    <property type="evidence" value="ECO:0007669"/>
    <property type="project" value="UniProtKB-KW"/>
</dbReference>
<dbReference type="GO" id="GO:0015078">
    <property type="term" value="F:proton transmembrane transporter activity"/>
    <property type="evidence" value="ECO:0007669"/>
    <property type="project" value="UniProtKB-UniRule"/>
</dbReference>
<dbReference type="GO" id="GO:0006813">
    <property type="term" value="P:potassium ion transport"/>
    <property type="evidence" value="ECO:0007669"/>
    <property type="project" value="UniProtKB-UniRule"/>
</dbReference>
<dbReference type="HAMAP" id="MF_01308">
    <property type="entry name" value="CemA_PxcA"/>
    <property type="match status" value="1"/>
</dbReference>
<dbReference type="InterPro" id="IPR004282">
    <property type="entry name" value="CemA"/>
</dbReference>
<dbReference type="PANTHER" id="PTHR33650:SF2">
    <property type="entry name" value="CHLOROPLAST ENVELOPE MEMBRANE PROTEIN"/>
    <property type="match status" value="1"/>
</dbReference>
<dbReference type="PANTHER" id="PTHR33650">
    <property type="entry name" value="CHLOROPLAST ENVELOPE MEMBRANE PROTEIN-RELATED"/>
    <property type="match status" value="1"/>
</dbReference>
<dbReference type="Pfam" id="PF03040">
    <property type="entry name" value="CemA"/>
    <property type="match status" value="1"/>
</dbReference>